<name>BGLI_EMENI</name>
<dbReference type="EC" id="3.2.1.21"/>
<dbReference type="EMBL" id="DQ490477">
    <property type="protein sequence ID" value="ABF50853.1"/>
    <property type="molecule type" value="mRNA"/>
</dbReference>
<dbReference type="EMBL" id="AACD01000036">
    <property type="protein sequence ID" value="EAA63912.1"/>
    <property type="status" value="ALT_SEQ"/>
    <property type="molecule type" value="Genomic_DNA"/>
</dbReference>
<dbReference type="EMBL" id="BN001307">
    <property type="protein sequence ID" value="CBF86422.1"/>
    <property type="status" value="ALT_SEQ"/>
    <property type="molecule type" value="Genomic_DNA"/>
</dbReference>
<dbReference type="RefSeq" id="XP_659831.1">
    <property type="nucleotide sequence ID" value="XM_654739.1"/>
</dbReference>
<dbReference type="SMR" id="Q5BB53"/>
<dbReference type="STRING" id="227321.Q5BB53"/>
<dbReference type="CAZy" id="GH3">
    <property type="family name" value="Glycoside Hydrolase Family 3"/>
</dbReference>
<dbReference type="GlyCosmos" id="Q5BB53">
    <property type="glycosylation" value="2 sites, No reported glycans"/>
</dbReference>
<dbReference type="KEGG" id="ani:ANIA_02227"/>
<dbReference type="eggNOG" id="ENOG502QR4D">
    <property type="taxonomic scope" value="Eukaryota"/>
</dbReference>
<dbReference type="HOGENOM" id="CLU_004542_4_0_1"/>
<dbReference type="InParanoid" id="Q5BB53"/>
<dbReference type="OrthoDB" id="47059at2759"/>
<dbReference type="UniPathway" id="UPA00696"/>
<dbReference type="Proteomes" id="UP000000560">
    <property type="component" value="Chromosome VII"/>
</dbReference>
<dbReference type="GO" id="GO:0005576">
    <property type="term" value="C:extracellular region"/>
    <property type="evidence" value="ECO:0007669"/>
    <property type="project" value="UniProtKB-SubCell"/>
</dbReference>
<dbReference type="GO" id="GO:0008422">
    <property type="term" value="F:beta-glucosidase activity"/>
    <property type="evidence" value="ECO:0000318"/>
    <property type="project" value="GO_Central"/>
</dbReference>
<dbReference type="GO" id="GO:0030245">
    <property type="term" value="P:cellulose catabolic process"/>
    <property type="evidence" value="ECO:0007669"/>
    <property type="project" value="UniProtKB-UniPathway"/>
</dbReference>
<dbReference type="GO" id="GO:0009251">
    <property type="term" value="P:glucan catabolic process"/>
    <property type="evidence" value="ECO:0000318"/>
    <property type="project" value="GO_Central"/>
</dbReference>
<dbReference type="FunFam" id="3.20.20.300:FF:000006">
    <property type="entry name" value="Beta-glucosidase H"/>
    <property type="match status" value="1"/>
</dbReference>
<dbReference type="FunFam" id="2.60.40.10:FF:000495">
    <property type="entry name" value="Periplasmic beta-glucosidase"/>
    <property type="match status" value="1"/>
</dbReference>
<dbReference type="FunFam" id="2.60.120.260:FF:000119">
    <property type="entry name" value="Probable beta-glucosidase I"/>
    <property type="match status" value="1"/>
</dbReference>
<dbReference type="Gene3D" id="2.60.120.260">
    <property type="entry name" value="Galactose-binding domain-like"/>
    <property type="match status" value="1"/>
</dbReference>
<dbReference type="Gene3D" id="3.40.50.1700">
    <property type="entry name" value="Glycoside hydrolase family 3 C-terminal domain"/>
    <property type="match status" value="1"/>
</dbReference>
<dbReference type="Gene3D" id="3.20.20.300">
    <property type="entry name" value="Glycoside hydrolase, family 3, N-terminal domain"/>
    <property type="match status" value="1"/>
</dbReference>
<dbReference type="Gene3D" id="2.60.40.10">
    <property type="entry name" value="Immunoglobulins"/>
    <property type="match status" value="1"/>
</dbReference>
<dbReference type="InterPro" id="IPR050288">
    <property type="entry name" value="Cellulose_deg_GH3"/>
</dbReference>
<dbReference type="InterPro" id="IPR026891">
    <property type="entry name" value="Fn3-like"/>
</dbReference>
<dbReference type="InterPro" id="IPR019800">
    <property type="entry name" value="Glyco_hydro_3_AS"/>
</dbReference>
<dbReference type="InterPro" id="IPR002772">
    <property type="entry name" value="Glyco_hydro_3_C"/>
</dbReference>
<dbReference type="InterPro" id="IPR036881">
    <property type="entry name" value="Glyco_hydro_3_C_sf"/>
</dbReference>
<dbReference type="InterPro" id="IPR001764">
    <property type="entry name" value="Glyco_hydro_3_N"/>
</dbReference>
<dbReference type="InterPro" id="IPR036962">
    <property type="entry name" value="Glyco_hydro_3_N_sf"/>
</dbReference>
<dbReference type="InterPro" id="IPR017853">
    <property type="entry name" value="Glycoside_hydrolase_SF"/>
</dbReference>
<dbReference type="InterPro" id="IPR013783">
    <property type="entry name" value="Ig-like_fold"/>
</dbReference>
<dbReference type="InterPro" id="IPR037524">
    <property type="entry name" value="PA14/GLEYA"/>
</dbReference>
<dbReference type="InterPro" id="IPR011658">
    <property type="entry name" value="PA14_dom"/>
</dbReference>
<dbReference type="PANTHER" id="PTHR42715">
    <property type="entry name" value="BETA-GLUCOSIDASE"/>
    <property type="match status" value="1"/>
</dbReference>
<dbReference type="PANTHER" id="PTHR42715:SF27">
    <property type="entry name" value="BETA-GLUCOSIDASE-RELATED"/>
    <property type="match status" value="1"/>
</dbReference>
<dbReference type="Pfam" id="PF14310">
    <property type="entry name" value="Fn3-like"/>
    <property type="match status" value="1"/>
</dbReference>
<dbReference type="Pfam" id="PF00933">
    <property type="entry name" value="Glyco_hydro_3"/>
    <property type="match status" value="1"/>
</dbReference>
<dbReference type="Pfam" id="PF01915">
    <property type="entry name" value="Glyco_hydro_3_C"/>
    <property type="match status" value="1"/>
</dbReference>
<dbReference type="Pfam" id="PF07691">
    <property type="entry name" value="PA14"/>
    <property type="match status" value="1"/>
</dbReference>
<dbReference type="PRINTS" id="PR00133">
    <property type="entry name" value="GLHYDRLASE3"/>
</dbReference>
<dbReference type="SMART" id="SM01217">
    <property type="entry name" value="Fn3_like"/>
    <property type="match status" value="1"/>
</dbReference>
<dbReference type="SMART" id="SM00758">
    <property type="entry name" value="PA14"/>
    <property type="match status" value="1"/>
</dbReference>
<dbReference type="SUPFAM" id="SSF51445">
    <property type="entry name" value="(Trans)glycosidases"/>
    <property type="match status" value="1"/>
</dbReference>
<dbReference type="SUPFAM" id="SSF56988">
    <property type="entry name" value="Anthrax protective antigen"/>
    <property type="match status" value="1"/>
</dbReference>
<dbReference type="SUPFAM" id="SSF52279">
    <property type="entry name" value="Beta-D-glucan exohydrolase, C-terminal domain"/>
    <property type="match status" value="1"/>
</dbReference>
<dbReference type="PROSITE" id="PS00775">
    <property type="entry name" value="GLYCOSYL_HYDROL_F3"/>
    <property type="match status" value="1"/>
</dbReference>
<dbReference type="PROSITE" id="PS51820">
    <property type="entry name" value="PA14"/>
    <property type="match status" value="1"/>
</dbReference>
<gene>
    <name type="primary">bglI</name>
    <name type="ORF">AN2227</name>
</gene>
<accession>Q5BB53</accession>
<accession>C8VML9</accession>
<accession>Q1HFU7</accession>
<organism>
    <name type="scientific">Emericella nidulans (strain FGSC A4 / ATCC 38163 / CBS 112.46 / NRRL 194 / M139)</name>
    <name type="common">Aspergillus nidulans</name>
    <dbReference type="NCBI Taxonomy" id="227321"/>
    <lineage>
        <taxon>Eukaryota</taxon>
        <taxon>Fungi</taxon>
        <taxon>Dikarya</taxon>
        <taxon>Ascomycota</taxon>
        <taxon>Pezizomycotina</taxon>
        <taxon>Eurotiomycetes</taxon>
        <taxon>Eurotiomycetidae</taxon>
        <taxon>Eurotiales</taxon>
        <taxon>Aspergillaceae</taxon>
        <taxon>Aspergillus</taxon>
        <taxon>Aspergillus subgen. Nidulantes</taxon>
    </lineage>
</organism>
<comment type="function">
    <text evidence="1">Beta-glucosidases are one of a number of cellulolytic enzymes, and catalyze the last step releasing glucose from the inhibitory cellobiose.</text>
</comment>
<comment type="catalytic activity">
    <reaction>
        <text>Hydrolysis of terminal, non-reducing beta-D-glucosyl residues with release of beta-D-glucose.</text>
        <dbReference type="EC" id="3.2.1.21"/>
    </reaction>
</comment>
<comment type="pathway">
    <text>Glycan metabolism; cellulose degradation.</text>
</comment>
<comment type="subcellular location">
    <subcellularLocation>
        <location evidence="1">Secreted</location>
    </subcellularLocation>
</comment>
<comment type="similarity">
    <text evidence="4">Belongs to the glycosyl hydrolase 3 family.</text>
</comment>
<comment type="sequence caution" evidence="4">
    <conflict type="erroneous gene model prediction">
        <sequence resource="EMBL-CDS" id="CBF86422"/>
    </conflict>
</comment>
<comment type="sequence caution" evidence="4">
    <conflict type="erroneous gene model prediction">
        <sequence resource="EMBL-CDS" id="EAA63912"/>
    </conflict>
</comment>
<evidence type="ECO:0000250" key="1"/>
<evidence type="ECO:0000255" key="2"/>
<evidence type="ECO:0000255" key="3">
    <source>
        <dbReference type="PROSITE-ProRule" id="PRU01164"/>
    </source>
</evidence>
<evidence type="ECO:0000305" key="4"/>
<reference key="1">
    <citation type="journal article" date="2006" name="Proc. Natl. Acad. Sci. U.S.A.">
        <title>Development and application of a suite of polysaccharide-degrading enzymes for analyzing plant cell walls.</title>
        <authorList>
            <person name="Bauer S."/>
            <person name="Vasu P."/>
            <person name="Persson S."/>
            <person name="Mort A.J."/>
            <person name="Somerville C.R."/>
        </authorList>
    </citation>
    <scope>NUCLEOTIDE SEQUENCE [MRNA]</scope>
    <source>
        <strain>FGSC A4 / ATCC 38163 / CBS 112.46 / NRRL 194 / M139</strain>
    </source>
</reference>
<reference key="2">
    <citation type="journal article" date="2005" name="Nature">
        <title>Sequencing of Aspergillus nidulans and comparative analysis with A. fumigatus and A. oryzae.</title>
        <authorList>
            <person name="Galagan J.E."/>
            <person name="Calvo S.E."/>
            <person name="Cuomo C."/>
            <person name="Ma L.-J."/>
            <person name="Wortman J.R."/>
            <person name="Batzoglou S."/>
            <person name="Lee S.-I."/>
            <person name="Bastuerkmen M."/>
            <person name="Spevak C.C."/>
            <person name="Clutterbuck J."/>
            <person name="Kapitonov V."/>
            <person name="Jurka J."/>
            <person name="Scazzocchio C."/>
            <person name="Farman M.L."/>
            <person name="Butler J."/>
            <person name="Purcell S."/>
            <person name="Harris S."/>
            <person name="Braus G.H."/>
            <person name="Draht O."/>
            <person name="Busch S."/>
            <person name="D'Enfert C."/>
            <person name="Bouchier C."/>
            <person name="Goldman G.H."/>
            <person name="Bell-Pedersen D."/>
            <person name="Griffiths-Jones S."/>
            <person name="Doonan J.H."/>
            <person name="Yu J."/>
            <person name="Vienken K."/>
            <person name="Pain A."/>
            <person name="Freitag M."/>
            <person name="Selker E.U."/>
            <person name="Archer D.B."/>
            <person name="Penalva M.A."/>
            <person name="Oakley B.R."/>
            <person name="Momany M."/>
            <person name="Tanaka T."/>
            <person name="Kumagai T."/>
            <person name="Asai K."/>
            <person name="Machida M."/>
            <person name="Nierman W.C."/>
            <person name="Denning D.W."/>
            <person name="Caddick M.X."/>
            <person name="Hynes M."/>
            <person name="Paoletti M."/>
            <person name="Fischer R."/>
            <person name="Miller B.L."/>
            <person name="Dyer P.S."/>
            <person name="Sachs M.S."/>
            <person name="Osmani S.A."/>
            <person name="Birren B.W."/>
        </authorList>
    </citation>
    <scope>NUCLEOTIDE SEQUENCE [LARGE SCALE GENOMIC DNA]</scope>
    <source>
        <strain>FGSC A4 / ATCC 38163 / CBS 112.46 / NRRL 194 / M139</strain>
    </source>
</reference>
<reference key="3">
    <citation type="journal article" date="2009" name="Fungal Genet. Biol.">
        <title>The 2008 update of the Aspergillus nidulans genome annotation: a community effort.</title>
        <authorList>
            <person name="Wortman J.R."/>
            <person name="Gilsenan J.M."/>
            <person name="Joardar V."/>
            <person name="Deegan J."/>
            <person name="Clutterbuck J."/>
            <person name="Andersen M.R."/>
            <person name="Archer D."/>
            <person name="Bencina M."/>
            <person name="Braus G."/>
            <person name="Coutinho P."/>
            <person name="von Dohren H."/>
            <person name="Doonan J."/>
            <person name="Driessen A.J."/>
            <person name="Durek P."/>
            <person name="Espeso E."/>
            <person name="Fekete E."/>
            <person name="Flipphi M."/>
            <person name="Estrada C.G."/>
            <person name="Geysens S."/>
            <person name="Goldman G."/>
            <person name="de Groot P.W."/>
            <person name="Hansen K."/>
            <person name="Harris S.D."/>
            <person name="Heinekamp T."/>
            <person name="Helmstaedt K."/>
            <person name="Henrissat B."/>
            <person name="Hofmann G."/>
            <person name="Homan T."/>
            <person name="Horio T."/>
            <person name="Horiuchi H."/>
            <person name="James S."/>
            <person name="Jones M."/>
            <person name="Karaffa L."/>
            <person name="Karanyi Z."/>
            <person name="Kato M."/>
            <person name="Keller N."/>
            <person name="Kelly D.E."/>
            <person name="Kiel J.A."/>
            <person name="Kim J.M."/>
            <person name="van der Klei I.J."/>
            <person name="Klis F.M."/>
            <person name="Kovalchuk A."/>
            <person name="Krasevec N."/>
            <person name="Kubicek C.P."/>
            <person name="Liu B."/>
            <person name="Maccabe A."/>
            <person name="Meyer V."/>
            <person name="Mirabito P."/>
            <person name="Miskei M."/>
            <person name="Mos M."/>
            <person name="Mullins J."/>
            <person name="Nelson D.R."/>
            <person name="Nielsen J."/>
            <person name="Oakley B.R."/>
            <person name="Osmani S.A."/>
            <person name="Pakula T."/>
            <person name="Paszewski A."/>
            <person name="Paulsen I."/>
            <person name="Pilsyk S."/>
            <person name="Pocsi I."/>
            <person name="Punt P.J."/>
            <person name="Ram A.F."/>
            <person name="Ren Q."/>
            <person name="Robellet X."/>
            <person name="Robson G."/>
            <person name="Seiboth B."/>
            <person name="van Solingen P."/>
            <person name="Specht T."/>
            <person name="Sun J."/>
            <person name="Taheri-Talesh N."/>
            <person name="Takeshita N."/>
            <person name="Ussery D."/>
            <person name="vanKuyk P.A."/>
            <person name="Visser H."/>
            <person name="van de Vondervoort P.J."/>
            <person name="de Vries R.P."/>
            <person name="Walton J."/>
            <person name="Xiang X."/>
            <person name="Xiong Y."/>
            <person name="Zeng A.P."/>
            <person name="Brandt B.W."/>
            <person name="Cornell M.J."/>
            <person name="van den Hondel C.A."/>
            <person name="Visser J."/>
            <person name="Oliver S.G."/>
            <person name="Turner G."/>
        </authorList>
    </citation>
    <scope>GENOME REANNOTATION</scope>
    <source>
        <strain>FGSC A4 / ATCC 38163 / CBS 112.46 / NRRL 194 / M139</strain>
    </source>
</reference>
<proteinExistence type="evidence at transcript level"/>
<protein>
    <recommendedName>
        <fullName>Probable beta-glucosidase I</fullName>
        <ecNumber>3.2.1.21</ecNumber>
    </recommendedName>
    <alternativeName>
        <fullName>Beta-D-glucoside glucohydrolase I</fullName>
    </alternativeName>
    <alternativeName>
        <fullName>Cellobiase I</fullName>
    </alternativeName>
    <alternativeName>
        <fullName>Gentiobiase I</fullName>
    </alternativeName>
</protein>
<sequence>MPQLDVDKTIEELRLGEKIDLVSGIDFWHTASVPRLNIPSLRMSDGPNGVRGTRFFNGVPAACFPCATALGATWDTELLHKVGHLMGEEAIAKGAHVILGPTINTQRSPLGGRGFESFAEDGVLAGHLAGYCSKGIQEKGVAACLKHFVCNDQEHERLAVDSIVTDRATREIYLLPFQIAMRICKTATVMTAYNKINGTHVSENKKYITDILRKEWGWDGLVMSDWFGTYSCTSESIIAGLDIEMPGKTRWRGDALAHAVSSNKVHEFVLDERVRNVLNLVNYVEPLGIPENAEEKVLNRPEDQALLRRAAAESIVLLKNEDNILPFNKEKSIAVIGPNAKIAAYCGGGSASLDAYYTITPFEGVSAQSKGEVHFAQGSYSYKDLPLIGHLLKTDDGKTGFKFRVYDEPASSSNRELLHELHLVSSQGFLMDYRHPKIKSYLYYVDMEGYFTPEESGVYDFGVVVVGTGKLLVDDEVVVDNTKNQRLGSAFFGNGTVEEKGSKELMAGQKYKITFQFGTAPTSDIDTRGVVIFGPGGFRFGAARRQTQEELISKAVEVASKADQVVVFAGLTSEWETEGYDRPDMDLPPGSDELISKILEVKPNAAIVIQSGTPVTMPWAPKAKALLQAWFGGNECGNGIADVLYGNVNPSGKLPLTFPVRLQDNPSYLNFRSERGRVLYGEDIYVGYRYYEKAQLPPLFPFGHGLSYTTFTREKLELNTSPEKDKLQDGEPITARVTVTNTGKVAGAETVQLWVVPPPTEVNRPVRELKGFAKVHLEPGESKDVEIVVEKKLATSWWDEKREAWASEKGVYWVQVTGTGEGVLTAEFEVKKTRFWTGL</sequence>
<keyword id="KW-0119">Carbohydrate metabolism</keyword>
<keyword id="KW-0136">Cellulose degradation</keyword>
<keyword id="KW-0325">Glycoprotein</keyword>
<keyword id="KW-0326">Glycosidase</keyword>
<keyword id="KW-0378">Hydrolase</keyword>
<keyword id="KW-0624">Polysaccharide degradation</keyword>
<keyword id="KW-1185">Reference proteome</keyword>
<keyword id="KW-0964">Secreted</keyword>
<feature type="chain" id="PRO_0000394890" description="Probable beta-glucosidase I">
    <location>
        <begin position="1"/>
        <end position="839"/>
    </location>
</feature>
<feature type="domain" description="PA14" evidence="3">
    <location>
        <begin position="396"/>
        <end position="556"/>
    </location>
</feature>
<feature type="active site" evidence="1">
    <location>
        <position position="225"/>
    </location>
</feature>
<feature type="glycosylation site" description="N-linked (GlcNAc...) asparagine" evidence="2">
    <location>
        <position position="197"/>
    </location>
</feature>
<feature type="glycosylation site" description="N-linked (GlcNAc...) asparagine" evidence="2">
    <location>
        <position position="494"/>
    </location>
</feature>